<organism>
    <name type="scientific">Salmonella typhi</name>
    <dbReference type="NCBI Taxonomy" id="90370"/>
    <lineage>
        <taxon>Bacteria</taxon>
        <taxon>Pseudomonadati</taxon>
        <taxon>Pseudomonadota</taxon>
        <taxon>Gammaproteobacteria</taxon>
        <taxon>Enterobacterales</taxon>
        <taxon>Enterobacteriaceae</taxon>
        <taxon>Salmonella</taxon>
    </lineage>
</organism>
<name>SRA_SALTI</name>
<evidence type="ECO:0000250" key="1"/>
<evidence type="ECO:0000256" key="2">
    <source>
        <dbReference type="SAM" id="MobiDB-lite"/>
    </source>
</evidence>
<evidence type="ECO:0000305" key="3"/>
<feature type="chain" id="PRO_0000208693" description="Stationary-phase-induced ribosome-associated protein">
    <location>
        <begin position="1"/>
        <end position="47"/>
    </location>
</feature>
<feature type="region of interest" description="Disordered" evidence="2">
    <location>
        <begin position="23"/>
        <end position="47"/>
    </location>
</feature>
<feature type="compositionally biased region" description="Polar residues" evidence="2">
    <location>
        <begin position="23"/>
        <end position="37"/>
    </location>
</feature>
<feature type="compositionally biased region" description="Basic residues" evidence="2">
    <location>
        <begin position="38"/>
        <end position="47"/>
    </location>
</feature>
<gene>
    <name type="primary">sra</name>
    <name type="synonym">rpsV</name>
    <name type="ordered locus">STY1495</name>
    <name type="ordered locus">t1480</name>
</gene>
<proteinExistence type="inferred from homology"/>
<dbReference type="EMBL" id="AL513382">
    <property type="protein sequence ID" value="CAD01755.1"/>
    <property type="molecule type" value="Genomic_DNA"/>
</dbReference>
<dbReference type="EMBL" id="AE014613">
    <property type="protein sequence ID" value="AAO69118.1"/>
    <property type="molecule type" value="Genomic_DNA"/>
</dbReference>
<dbReference type="RefSeq" id="NP_455925.1">
    <property type="nucleotide sequence ID" value="NC_003198.1"/>
</dbReference>
<dbReference type="RefSeq" id="WP_000841559.1">
    <property type="nucleotide sequence ID" value="NZ_WSUR01000006.1"/>
</dbReference>
<dbReference type="STRING" id="220341.gene:17585445"/>
<dbReference type="KEGG" id="stt:t1480"/>
<dbReference type="KEGG" id="sty:STY1495"/>
<dbReference type="PATRIC" id="fig|220341.7.peg.1505"/>
<dbReference type="eggNOG" id="ENOG5033FPW">
    <property type="taxonomic scope" value="Bacteria"/>
</dbReference>
<dbReference type="HOGENOM" id="CLU_210948_0_0_6"/>
<dbReference type="OrthoDB" id="6590569at2"/>
<dbReference type="Proteomes" id="UP000000541">
    <property type="component" value="Chromosome"/>
</dbReference>
<dbReference type="Proteomes" id="UP000002670">
    <property type="component" value="Chromosome"/>
</dbReference>
<dbReference type="GO" id="GO:0006412">
    <property type="term" value="P:translation"/>
    <property type="evidence" value="ECO:0007669"/>
    <property type="project" value="InterPro"/>
</dbReference>
<dbReference type="InterPro" id="IPR012607">
    <property type="entry name" value="SRA-like"/>
</dbReference>
<dbReference type="NCBIfam" id="NF007473">
    <property type="entry name" value="PRK10057.1"/>
    <property type="match status" value="1"/>
</dbReference>
<dbReference type="Pfam" id="PF08136">
    <property type="entry name" value="SRA_like"/>
    <property type="match status" value="1"/>
</dbReference>
<accession>Q8XFL2</accession>
<accession>Q7AMZ8</accession>
<protein>
    <recommendedName>
        <fullName>Stationary-phase-induced ribosome-associated protein</fullName>
        <shortName>SRA</shortName>
    </recommendedName>
    <alternativeName>
        <fullName>30S ribosomal protein S22</fullName>
    </alternativeName>
</protein>
<comment type="function">
    <text evidence="1">Although this protein associates with the 30S subunit of the ribosome it is not considered to be a bona fide ribosomal protein.</text>
</comment>
<comment type="subunit">
    <text evidence="1">Associates exclusively with the 30S subunit; there is 0.1 copy per ribosome in the exponential phase and 0.4 copies per ribosome in the stationary phase.</text>
</comment>
<comment type="similarity">
    <text evidence="3">Belongs to the SRA family.</text>
</comment>
<sequence>MKSNRQARHILGLDYRISNQRKVVTEGDTSSVVNNPTGRKRRADSQK</sequence>
<reference key="1">
    <citation type="journal article" date="2001" name="Nature">
        <title>Complete genome sequence of a multiple drug resistant Salmonella enterica serovar Typhi CT18.</title>
        <authorList>
            <person name="Parkhill J."/>
            <person name="Dougan G."/>
            <person name="James K.D."/>
            <person name="Thomson N.R."/>
            <person name="Pickard D."/>
            <person name="Wain J."/>
            <person name="Churcher C.M."/>
            <person name="Mungall K.L."/>
            <person name="Bentley S.D."/>
            <person name="Holden M.T.G."/>
            <person name="Sebaihia M."/>
            <person name="Baker S."/>
            <person name="Basham D."/>
            <person name="Brooks K."/>
            <person name="Chillingworth T."/>
            <person name="Connerton P."/>
            <person name="Cronin A."/>
            <person name="Davis P."/>
            <person name="Davies R.M."/>
            <person name="Dowd L."/>
            <person name="White N."/>
            <person name="Farrar J."/>
            <person name="Feltwell T."/>
            <person name="Hamlin N."/>
            <person name="Haque A."/>
            <person name="Hien T.T."/>
            <person name="Holroyd S."/>
            <person name="Jagels K."/>
            <person name="Krogh A."/>
            <person name="Larsen T.S."/>
            <person name="Leather S."/>
            <person name="Moule S."/>
            <person name="O'Gaora P."/>
            <person name="Parry C."/>
            <person name="Quail M.A."/>
            <person name="Rutherford K.M."/>
            <person name="Simmonds M."/>
            <person name="Skelton J."/>
            <person name="Stevens K."/>
            <person name="Whitehead S."/>
            <person name="Barrell B.G."/>
        </authorList>
    </citation>
    <scope>NUCLEOTIDE SEQUENCE [LARGE SCALE GENOMIC DNA]</scope>
    <source>
        <strain>CT18</strain>
    </source>
</reference>
<reference key="2">
    <citation type="journal article" date="2003" name="J. Bacteriol.">
        <title>Comparative genomics of Salmonella enterica serovar Typhi strains Ty2 and CT18.</title>
        <authorList>
            <person name="Deng W."/>
            <person name="Liou S.-R."/>
            <person name="Plunkett G. III"/>
            <person name="Mayhew G.F."/>
            <person name="Rose D.J."/>
            <person name="Burland V."/>
            <person name="Kodoyianni V."/>
            <person name="Schwartz D.C."/>
            <person name="Blattner F.R."/>
        </authorList>
    </citation>
    <scope>NUCLEOTIDE SEQUENCE [LARGE SCALE GENOMIC DNA]</scope>
    <source>
        <strain>ATCC 700931 / Ty2</strain>
    </source>
</reference>